<proteinExistence type="inferred from homology"/>
<accession>Q49CB8</accession>
<organism>
    <name type="scientific">Cuscuta sandwichiana</name>
    <name type="common">Kauna'oa</name>
    <dbReference type="NCBI Taxonomy" id="197374"/>
    <lineage>
        <taxon>Eukaryota</taxon>
        <taxon>Viridiplantae</taxon>
        <taxon>Streptophyta</taxon>
        <taxon>Embryophyta</taxon>
        <taxon>Tracheophyta</taxon>
        <taxon>Spermatophyta</taxon>
        <taxon>Magnoliopsida</taxon>
        <taxon>eudicotyledons</taxon>
        <taxon>Gunneridae</taxon>
        <taxon>Pentapetalae</taxon>
        <taxon>asterids</taxon>
        <taxon>lamiids</taxon>
        <taxon>Solanales</taxon>
        <taxon>Convolvulaceae</taxon>
        <taxon>Cuscuteae</taxon>
        <taxon>Cuscuta</taxon>
        <taxon>Cuscuta subgen. Grammica</taxon>
        <taxon>Cuscuta sect. Cleistogrammica</taxon>
    </lineage>
</organism>
<gene>
    <name type="primary">rps4</name>
</gene>
<dbReference type="EMBL" id="AY936346">
    <property type="protein sequence ID" value="AAY58016.1"/>
    <property type="molecule type" value="Genomic_DNA"/>
</dbReference>
<dbReference type="GO" id="GO:0009536">
    <property type="term" value="C:plastid"/>
    <property type="evidence" value="ECO:0007669"/>
    <property type="project" value="UniProtKB-SubCell"/>
</dbReference>
<dbReference type="GO" id="GO:0015935">
    <property type="term" value="C:small ribosomal subunit"/>
    <property type="evidence" value="ECO:0007669"/>
    <property type="project" value="InterPro"/>
</dbReference>
<dbReference type="GO" id="GO:0019843">
    <property type="term" value="F:rRNA binding"/>
    <property type="evidence" value="ECO:0007669"/>
    <property type="project" value="UniProtKB-KW"/>
</dbReference>
<dbReference type="GO" id="GO:0003735">
    <property type="term" value="F:structural constituent of ribosome"/>
    <property type="evidence" value="ECO:0007669"/>
    <property type="project" value="InterPro"/>
</dbReference>
<dbReference type="GO" id="GO:0042274">
    <property type="term" value="P:ribosomal small subunit biogenesis"/>
    <property type="evidence" value="ECO:0007669"/>
    <property type="project" value="TreeGrafter"/>
</dbReference>
<dbReference type="GO" id="GO:0006412">
    <property type="term" value="P:translation"/>
    <property type="evidence" value="ECO:0007669"/>
    <property type="project" value="InterPro"/>
</dbReference>
<dbReference type="CDD" id="cd00165">
    <property type="entry name" value="S4"/>
    <property type="match status" value="1"/>
</dbReference>
<dbReference type="FunFam" id="1.10.1050.10:FF:000002">
    <property type="entry name" value="30S ribosomal protein S4, chloroplastic"/>
    <property type="match status" value="1"/>
</dbReference>
<dbReference type="FunFam" id="3.10.290.10:FF:000081">
    <property type="entry name" value="30S ribosomal protein S4, chloroplastic"/>
    <property type="match status" value="1"/>
</dbReference>
<dbReference type="Gene3D" id="1.10.1050.10">
    <property type="entry name" value="Ribosomal Protein S4 Delta 41, Chain A, domain 1"/>
    <property type="match status" value="1"/>
</dbReference>
<dbReference type="Gene3D" id="3.10.290.10">
    <property type="entry name" value="RNA-binding S4 domain"/>
    <property type="match status" value="1"/>
</dbReference>
<dbReference type="HAMAP" id="MF_01306_B">
    <property type="entry name" value="Ribosomal_uS4_B"/>
    <property type="match status" value="1"/>
</dbReference>
<dbReference type="InterPro" id="IPR022801">
    <property type="entry name" value="Ribosomal_uS4"/>
</dbReference>
<dbReference type="InterPro" id="IPR005709">
    <property type="entry name" value="Ribosomal_uS4_bac-type"/>
</dbReference>
<dbReference type="InterPro" id="IPR018079">
    <property type="entry name" value="Ribosomal_uS4_CS"/>
</dbReference>
<dbReference type="InterPro" id="IPR001912">
    <property type="entry name" value="Ribosomal_uS4_N"/>
</dbReference>
<dbReference type="InterPro" id="IPR002942">
    <property type="entry name" value="S4_RNA-bd"/>
</dbReference>
<dbReference type="InterPro" id="IPR036986">
    <property type="entry name" value="S4_RNA-bd_sf"/>
</dbReference>
<dbReference type="NCBIfam" id="NF003717">
    <property type="entry name" value="PRK05327.1"/>
    <property type="match status" value="1"/>
</dbReference>
<dbReference type="NCBIfam" id="TIGR01017">
    <property type="entry name" value="rpsD_bact"/>
    <property type="match status" value="1"/>
</dbReference>
<dbReference type="PANTHER" id="PTHR11831">
    <property type="entry name" value="30S 40S RIBOSOMAL PROTEIN"/>
    <property type="match status" value="1"/>
</dbReference>
<dbReference type="PANTHER" id="PTHR11831:SF4">
    <property type="entry name" value="SMALL RIBOSOMAL SUBUNIT PROTEIN US4M"/>
    <property type="match status" value="1"/>
</dbReference>
<dbReference type="Pfam" id="PF00163">
    <property type="entry name" value="Ribosomal_S4"/>
    <property type="match status" value="1"/>
</dbReference>
<dbReference type="Pfam" id="PF01479">
    <property type="entry name" value="S4"/>
    <property type="match status" value="1"/>
</dbReference>
<dbReference type="SMART" id="SM01390">
    <property type="entry name" value="Ribosomal_S4"/>
    <property type="match status" value="1"/>
</dbReference>
<dbReference type="SMART" id="SM00363">
    <property type="entry name" value="S4"/>
    <property type="match status" value="1"/>
</dbReference>
<dbReference type="SUPFAM" id="SSF55174">
    <property type="entry name" value="Alpha-L RNA-binding motif"/>
    <property type="match status" value="1"/>
</dbReference>
<dbReference type="PROSITE" id="PS00632">
    <property type="entry name" value="RIBOSOMAL_S4"/>
    <property type="match status" value="1"/>
</dbReference>
<dbReference type="PROSITE" id="PS50889">
    <property type="entry name" value="S4"/>
    <property type="match status" value="1"/>
</dbReference>
<protein>
    <recommendedName>
        <fullName evidence="2">Small ribosomal subunit protein uS4c</fullName>
    </recommendedName>
    <alternativeName>
        <fullName>Plastid 30S ribosomal protein S4</fullName>
    </alternativeName>
</protein>
<reference key="1">
    <citation type="journal article" date="2005" name="J. Mol. Evol.">
        <title>Down the slippery slope: plastid genome evolution in Convolvulaceae.</title>
        <authorList>
            <person name="Stefanovic S."/>
            <person name="Olmstead R.G."/>
        </authorList>
    </citation>
    <scope>NUCLEOTIDE SEQUENCE [GENOMIC DNA]</scope>
</reference>
<sequence>MSRYRGPRLKKIRRLGALPGLTNKSPRAIRDLRNNSRSEYRIRLEEKQKLRFHYGLTEKQLINYVQIARKAKGSTGKVLLQLLEMRLDNILFRLGMASTIXAARQLVNHRHVLVNGRLVNRPSYRCKPHDIIMPKNTTKSGVLVQNSLELFTGKELANHLNLFSTPYKGLVNKIVDTNWIGLKINELLVVEYYSRQA</sequence>
<geneLocation type="plastid"/>
<feature type="chain" id="PRO_0000293425" description="Small ribosomal subunit protein uS4c">
    <location>
        <begin position="1"/>
        <end position="197"/>
    </location>
</feature>
<feature type="domain" description="S4 RNA-binding">
    <location>
        <begin position="85"/>
        <end position="161"/>
    </location>
</feature>
<keyword id="KW-0934">Plastid</keyword>
<keyword id="KW-0687">Ribonucleoprotein</keyword>
<keyword id="KW-0689">Ribosomal protein</keyword>
<keyword id="KW-0694">RNA-binding</keyword>
<keyword id="KW-0699">rRNA-binding</keyword>
<evidence type="ECO:0000250" key="1"/>
<evidence type="ECO:0000305" key="2"/>
<comment type="function">
    <text evidence="1">One of the primary rRNA binding proteins, it binds directly to 16S rRNA where it nucleates assembly of the body of the 30S subunit.</text>
</comment>
<comment type="function">
    <text evidence="1">With S5 and S12 plays an important role in translational accuracy.</text>
</comment>
<comment type="subunit">
    <text evidence="1">Part of the 30S ribosomal subunit. Contacts protein S5. The interaction surface between S4 and S5 is involved in control of translational fidelity (By similarity).</text>
</comment>
<comment type="subcellular location">
    <subcellularLocation>
        <location>Plastid</location>
    </subcellularLocation>
</comment>
<comment type="similarity">
    <text evidence="2">Belongs to the universal ribosomal protein uS4 family.</text>
</comment>
<name>RR4_CUSSA</name>